<feature type="chain" id="PRO_0000087704" description="Small ribosomal subunit protein mS22">
    <location>
        <begin position="1"/>
        <end position="359"/>
    </location>
</feature>
<feature type="region of interest" description="Disordered" evidence="3">
    <location>
        <begin position="40"/>
        <end position="65"/>
    </location>
</feature>
<feature type="modified residue" description="Phosphoserine" evidence="2">
    <location>
        <position position="54"/>
    </location>
</feature>
<feature type="modified residue" description="N6-acetyllysine" evidence="2">
    <location>
        <position position="210"/>
    </location>
</feature>
<gene>
    <name type="primary">Mrps22</name>
    <name type="synonym">Rpms22</name>
</gene>
<proteinExistence type="evidence at protein level"/>
<accession>Q9CXW2</accession>
<accession>Q3U3T2</accession>
<accession>Q8VDG9</accession>
<accession>Q9D185</accession>
<protein>
    <recommendedName>
        <fullName evidence="5">Small ribosomal subunit protein mS22</fullName>
    </recommendedName>
    <alternativeName>
        <fullName>28S ribosomal protein S22, mitochondrial</fullName>
        <shortName>MRP-S22</shortName>
        <shortName>S22mt</shortName>
    </alternativeName>
</protein>
<reference key="1">
    <citation type="journal article" date="2005" name="Science">
        <title>The transcriptional landscape of the mammalian genome.</title>
        <authorList>
            <person name="Carninci P."/>
            <person name="Kasukawa T."/>
            <person name="Katayama S."/>
            <person name="Gough J."/>
            <person name="Frith M.C."/>
            <person name="Maeda N."/>
            <person name="Oyama R."/>
            <person name="Ravasi T."/>
            <person name="Lenhard B."/>
            <person name="Wells C."/>
            <person name="Kodzius R."/>
            <person name="Shimokawa K."/>
            <person name="Bajic V.B."/>
            <person name="Brenner S.E."/>
            <person name="Batalov S."/>
            <person name="Forrest A.R."/>
            <person name="Zavolan M."/>
            <person name="Davis M.J."/>
            <person name="Wilming L.G."/>
            <person name="Aidinis V."/>
            <person name="Allen J.E."/>
            <person name="Ambesi-Impiombato A."/>
            <person name="Apweiler R."/>
            <person name="Aturaliya R.N."/>
            <person name="Bailey T.L."/>
            <person name="Bansal M."/>
            <person name="Baxter L."/>
            <person name="Beisel K.W."/>
            <person name="Bersano T."/>
            <person name="Bono H."/>
            <person name="Chalk A.M."/>
            <person name="Chiu K.P."/>
            <person name="Choudhary V."/>
            <person name="Christoffels A."/>
            <person name="Clutterbuck D.R."/>
            <person name="Crowe M.L."/>
            <person name="Dalla E."/>
            <person name="Dalrymple B.P."/>
            <person name="de Bono B."/>
            <person name="Della Gatta G."/>
            <person name="di Bernardo D."/>
            <person name="Down T."/>
            <person name="Engstrom P."/>
            <person name="Fagiolini M."/>
            <person name="Faulkner G."/>
            <person name="Fletcher C.F."/>
            <person name="Fukushima T."/>
            <person name="Furuno M."/>
            <person name="Futaki S."/>
            <person name="Gariboldi M."/>
            <person name="Georgii-Hemming P."/>
            <person name="Gingeras T.R."/>
            <person name="Gojobori T."/>
            <person name="Green R.E."/>
            <person name="Gustincich S."/>
            <person name="Harbers M."/>
            <person name="Hayashi Y."/>
            <person name="Hensch T.K."/>
            <person name="Hirokawa N."/>
            <person name="Hill D."/>
            <person name="Huminiecki L."/>
            <person name="Iacono M."/>
            <person name="Ikeo K."/>
            <person name="Iwama A."/>
            <person name="Ishikawa T."/>
            <person name="Jakt M."/>
            <person name="Kanapin A."/>
            <person name="Katoh M."/>
            <person name="Kawasawa Y."/>
            <person name="Kelso J."/>
            <person name="Kitamura H."/>
            <person name="Kitano H."/>
            <person name="Kollias G."/>
            <person name="Krishnan S.P."/>
            <person name="Kruger A."/>
            <person name="Kummerfeld S.K."/>
            <person name="Kurochkin I.V."/>
            <person name="Lareau L.F."/>
            <person name="Lazarevic D."/>
            <person name="Lipovich L."/>
            <person name="Liu J."/>
            <person name="Liuni S."/>
            <person name="McWilliam S."/>
            <person name="Madan Babu M."/>
            <person name="Madera M."/>
            <person name="Marchionni L."/>
            <person name="Matsuda H."/>
            <person name="Matsuzawa S."/>
            <person name="Miki H."/>
            <person name="Mignone F."/>
            <person name="Miyake S."/>
            <person name="Morris K."/>
            <person name="Mottagui-Tabar S."/>
            <person name="Mulder N."/>
            <person name="Nakano N."/>
            <person name="Nakauchi H."/>
            <person name="Ng P."/>
            <person name="Nilsson R."/>
            <person name="Nishiguchi S."/>
            <person name="Nishikawa S."/>
            <person name="Nori F."/>
            <person name="Ohara O."/>
            <person name="Okazaki Y."/>
            <person name="Orlando V."/>
            <person name="Pang K.C."/>
            <person name="Pavan W.J."/>
            <person name="Pavesi G."/>
            <person name="Pesole G."/>
            <person name="Petrovsky N."/>
            <person name="Piazza S."/>
            <person name="Reed J."/>
            <person name="Reid J.F."/>
            <person name="Ring B.Z."/>
            <person name="Ringwald M."/>
            <person name="Rost B."/>
            <person name="Ruan Y."/>
            <person name="Salzberg S.L."/>
            <person name="Sandelin A."/>
            <person name="Schneider C."/>
            <person name="Schoenbach C."/>
            <person name="Sekiguchi K."/>
            <person name="Semple C.A."/>
            <person name="Seno S."/>
            <person name="Sessa L."/>
            <person name="Sheng Y."/>
            <person name="Shibata Y."/>
            <person name="Shimada H."/>
            <person name="Shimada K."/>
            <person name="Silva D."/>
            <person name="Sinclair B."/>
            <person name="Sperling S."/>
            <person name="Stupka E."/>
            <person name="Sugiura K."/>
            <person name="Sultana R."/>
            <person name="Takenaka Y."/>
            <person name="Taki K."/>
            <person name="Tammoja K."/>
            <person name="Tan S.L."/>
            <person name="Tang S."/>
            <person name="Taylor M.S."/>
            <person name="Tegner J."/>
            <person name="Teichmann S.A."/>
            <person name="Ueda H.R."/>
            <person name="van Nimwegen E."/>
            <person name="Verardo R."/>
            <person name="Wei C.L."/>
            <person name="Yagi K."/>
            <person name="Yamanishi H."/>
            <person name="Zabarovsky E."/>
            <person name="Zhu S."/>
            <person name="Zimmer A."/>
            <person name="Hide W."/>
            <person name="Bult C."/>
            <person name="Grimmond S.M."/>
            <person name="Teasdale R.D."/>
            <person name="Liu E.T."/>
            <person name="Brusic V."/>
            <person name="Quackenbush J."/>
            <person name="Wahlestedt C."/>
            <person name="Mattick J.S."/>
            <person name="Hume D.A."/>
            <person name="Kai C."/>
            <person name="Sasaki D."/>
            <person name="Tomaru Y."/>
            <person name="Fukuda S."/>
            <person name="Kanamori-Katayama M."/>
            <person name="Suzuki M."/>
            <person name="Aoki J."/>
            <person name="Arakawa T."/>
            <person name="Iida J."/>
            <person name="Imamura K."/>
            <person name="Itoh M."/>
            <person name="Kato T."/>
            <person name="Kawaji H."/>
            <person name="Kawagashira N."/>
            <person name="Kawashima T."/>
            <person name="Kojima M."/>
            <person name="Kondo S."/>
            <person name="Konno H."/>
            <person name="Nakano K."/>
            <person name="Ninomiya N."/>
            <person name="Nishio T."/>
            <person name="Okada M."/>
            <person name="Plessy C."/>
            <person name="Shibata K."/>
            <person name="Shiraki T."/>
            <person name="Suzuki S."/>
            <person name="Tagami M."/>
            <person name="Waki K."/>
            <person name="Watahiki A."/>
            <person name="Okamura-Oho Y."/>
            <person name="Suzuki H."/>
            <person name="Kawai J."/>
            <person name="Hayashizaki Y."/>
        </authorList>
    </citation>
    <scope>NUCLEOTIDE SEQUENCE [LARGE SCALE MRNA]</scope>
    <source>
        <strain>C57BL/6J</strain>
        <strain>NOD</strain>
        <tissue>Embryo</tissue>
        <tissue>Embryonic head</tissue>
    </source>
</reference>
<reference key="2">
    <citation type="journal article" date="2004" name="Genome Res.">
        <title>The status, quality, and expansion of the NIH full-length cDNA project: the Mammalian Gene Collection (MGC).</title>
        <authorList>
            <consortium name="The MGC Project Team"/>
        </authorList>
    </citation>
    <scope>NUCLEOTIDE SEQUENCE [LARGE SCALE MRNA]</scope>
    <source>
        <strain>Czech II</strain>
        <tissue>Mammary gland</tissue>
    </source>
</reference>
<reference key="3">
    <citation type="journal article" date="2010" name="Cell">
        <title>A tissue-specific atlas of mouse protein phosphorylation and expression.</title>
        <authorList>
            <person name="Huttlin E.L."/>
            <person name="Jedrychowski M.P."/>
            <person name="Elias J.E."/>
            <person name="Goswami T."/>
            <person name="Rad R."/>
            <person name="Beausoleil S.A."/>
            <person name="Villen J."/>
            <person name="Haas W."/>
            <person name="Sowa M.E."/>
            <person name="Gygi S.P."/>
        </authorList>
    </citation>
    <scope>IDENTIFICATION BY MASS SPECTROMETRY [LARGE SCALE ANALYSIS]</scope>
    <source>
        <tissue>Brain</tissue>
        <tissue>Brown adipose tissue</tissue>
        <tissue>Heart</tissue>
        <tissue>Kidney</tissue>
        <tissue>Liver</tissue>
        <tissue>Spleen</tissue>
        <tissue>Testis</tissue>
    </source>
</reference>
<reference key="4">
    <citation type="journal article" date="2018" name="Hum. Mol. Genet.">
        <title>Mutations in the mitochondrial ribosomal protein MRPS22 lead to primary ovarian insufficiency.</title>
        <authorList>
            <person name="Chen A."/>
            <person name="Tiosano D."/>
            <person name="Guran T."/>
            <person name="Baris H.N."/>
            <person name="Bayram Y."/>
            <person name="Mory A."/>
            <person name="Shapiro-Kulnane L."/>
            <person name="Hodges C.A."/>
            <person name="Akdemir Z.C."/>
            <person name="Turan S."/>
            <person name="Jhangiani S.N."/>
            <person name="van den Akker F."/>
            <person name="Hoppel C.L."/>
            <person name="Salz H.K."/>
            <person name="Lupski J.R."/>
            <person name="Buchner D.A."/>
        </authorList>
    </citation>
    <scope>DISRUPTION PHENOTYPE</scope>
</reference>
<dbReference type="EMBL" id="AK003836">
    <property type="protein sequence ID" value="BAB23027.2"/>
    <property type="molecule type" value="mRNA"/>
</dbReference>
<dbReference type="EMBL" id="AK013925">
    <property type="protein sequence ID" value="BAB29061.1"/>
    <property type="molecule type" value="mRNA"/>
</dbReference>
<dbReference type="EMBL" id="AK154600">
    <property type="protein sequence ID" value="BAE32703.1"/>
    <property type="molecule type" value="mRNA"/>
</dbReference>
<dbReference type="EMBL" id="BC021882">
    <property type="protein sequence ID" value="AAH21882.1"/>
    <property type="status" value="ALT_INIT"/>
    <property type="molecule type" value="mRNA"/>
</dbReference>
<dbReference type="EMBL" id="BC051198">
    <property type="protein sequence ID" value="AAH51198.1"/>
    <property type="molecule type" value="mRNA"/>
</dbReference>
<dbReference type="CCDS" id="CCDS23427.1"/>
<dbReference type="RefSeq" id="NP_079761.1">
    <property type="nucleotide sequence ID" value="NM_025485.3"/>
</dbReference>
<dbReference type="PDB" id="7PNT">
    <property type="method" value="EM"/>
    <property type="resolution" value="3.19 A"/>
    <property type="chains" value="R=1-359"/>
</dbReference>
<dbReference type="PDB" id="7PNU">
    <property type="method" value="EM"/>
    <property type="resolution" value="3.06 A"/>
    <property type="chains" value="R=1-359"/>
</dbReference>
<dbReference type="PDB" id="7PNV">
    <property type="method" value="EM"/>
    <property type="resolution" value="3.06 A"/>
    <property type="chains" value="R=1-359"/>
</dbReference>
<dbReference type="PDB" id="7PNW">
    <property type="method" value="EM"/>
    <property type="resolution" value="3.09 A"/>
    <property type="chains" value="R=1-359"/>
</dbReference>
<dbReference type="PDBsum" id="7PNT"/>
<dbReference type="PDBsum" id="7PNU"/>
<dbReference type="PDBsum" id="7PNV"/>
<dbReference type="PDBsum" id="7PNW"/>
<dbReference type="EMDB" id="EMD-13551"/>
<dbReference type="EMDB" id="EMD-13552"/>
<dbReference type="EMDB" id="EMD-13553"/>
<dbReference type="EMDB" id="EMD-13554"/>
<dbReference type="SMR" id="Q9CXW2"/>
<dbReference type="BioGRID" id="211091">
    <property type="interactions" value="15"/>
</dbReference>
<dbReference type="ComplexPortal" id="CPX-5301">
    <property type="entry name" value="28S mitochondrial small ribosomal subunit"/>
</dbReference>
<dbReference type="FunCoup" id="Q9CXW2">
    <property type="interactions" value="2135"/>
</dbReference>
<dbReference type="IntAct" id="Q9CXW2">
    <property type="interactions" value="2"/>
</dbReference>
<dbReference type="MINT" id="Q9CXW2"/>
<dbReference type="STRING" id="10090.ENSMUSP00000035034"/>
<dbReference type="iPTMnet" id="Q9CXW2"/>
<dbReference type="PhosphoSitePlus" id="Q9CXW2"/>
<dbReference type="jPOST" id="Q9CXW2"/>
<dbReference type="PaxDb" id="10090-ENSMUSP00000035034"/>
<dbReference type="PeptideAtlas" id="Q9CXW2"/>
<dbReference type="ProteomicsDB" id="257047"/>
<dbReference type="Pumba" id="Q9CXW2"/>
<dbReference type="Antibodypedia" id="1600">
    <property type="antibodies" value="185 antibodies from 27 providers"/>
</dbReference>
<dbReference type="Ensembl" id="ENSMUST00000035034.10">
    <property type="protein sequence ID" value="ENSMUSP00000035034.9"/>
    <property type="gene ID" value="ENSMUSG00000032459.10"/>
</dbReference>
<dbReference type="GeneID" id="64655"/>
<dbReference type="KEGG" id="mmu:64655"/>
<dbReference type="UCSC" id="uc009rdn.3">
    <property type="organism name" value="mouse"/>
</dbReference>
<dbReference type="AGR" id="MGI:1928137"/>
<dbReference type="CTD" id="56945"/>
<dbReference type="MGI" id="MGI:1928137">
    <property type="gene designation" value="Mrps22"/>
</dbReference>
<dbReference type="VEuPathDB" id="HostDB:ENSMUSG00000032459"/>
<dbReference type="eggNOG" id="KOG3890">
    <property type="taxonomic scope" value="Eukaryota"/>
</dbReference>
<dbReference type="GeneTree" id="ENSGT00390000006095"/>
<dbReference type="HOGENOM" id="CLU_053702_1_0_1"/>
<dbReference type="InParanoid" id="Q9CXW2"/>
<dbReference type="OMA" id="GYIELTL"/>
<dbReference type="OrthoDB" id="10052321at2759"/>
<dbReference type="PhylomeDB" id="Q9CXW2"/>
<dbReference type="TreeFam" id="TF312882"/>
<dbReference type="Reactome" id="R-MMU-5389840">
    <property type="pathway name" value="Mitochondrial translation elongation"/>
</dbReference>
<dbReference type="Reactome" id="R-MMU-5419276">
    <property type="pathway name" value="Mitochondrial translation termination"/>
</dbReference>
<dbReference type="BioGRID-ORCS" id="64655">
    <property type="hits" value="23 hits in 79 CRISPR screens"/>
</dbReference>
<dbReference type="ChiTaRS" id="Mrps22">
    <property type="organism name" value="mouse"/>
</dbReference>
<dbReference type="PRO" id="PR:Q9CXW2"/>
<dbReference type="Proteomes" id="UP000000589">
    <property type="component" value="Chromosome 9"/>
</dbReference>
<dbReference type="RNAct" id="Q9CXW2">
    <property type="molecule type" value="protein"/>
</dbReference>
<dbReference type="Bgee" id="ENSMUSG00000032459">
    <property type="expression patterns" value="Expressed in primary oocyte and 263 other cell types or tissues"/>
</dbReference>
<dbReference type="GO" id="GO:0005743">
    <property type="term" value="C:mitochondrial inner membrane"/>
    <property type="evidence" value="ECO:0000303"/>
    <property type="project" value="ComplexPortal"/>
</dbReference>
<dbReference type="GO" id="GO:0005763">
    <property type="term" value="C:mitochondrial small ribosomal subunit"/>
    <property type="evidence" value="ECO:0000250"/>
    <property type="project" value="UniProtKB"/>
</dbReference>
<dbReference type="GO" id="GO:0005739">
    <property type="term" value="C:mitochondrion"/>
    <property type="evidence" value="ECO:0007005"/>
    <property type="project" value="MGI"/>
</dbReference>
<dbReference type="GO" id="GO:0003735">
    <property type="term" value="F:structural constituent of ribosome"/>
    <property type="evidence" value="ECO:0000266"/>
    <property type="project" value="MGI"/>
</dbReference>
<dbReference type="GO" id="GO:0032543">
    <property type="term" value="P:mitochondrial translation"/>
    <property type="evidence" value="ECO:0000303"/>
    <property type="project" value="ComplexPortal"/>
</dbReference>
<dbReference type="InterPro" id="IPR019374">
    <property type="entry name" value="Ribosomal_mS22"/>
</dbReference>
<dbReference type="PANTHER" id="PTHR13071">
    <property type="entry name" value="MITOCHONDRIAL 28S RIBOSOMAL PROTEIN S22"/>
    <property type="match status" value="1"/>
</dbReference>
<dbReference type="PANTHER" id="PTHR13071:SF4">
    <property type="entry name" value="SMALL RIBOSOMAL SUBUNIT PROTEIN MS22"/>
    <property type="match status" value="1"/>
</dbReference>
<dbReference type="Pfam" id="PF10245">
    <property type="entry name" value="MRP-S22"/>
    <property type="match status" value="1"/>
</dbReference>
<keyword id="KW-0002">3D-structure</keyword>
<keyword id="KW-0007">Acetylation</keyword>
<keyword id="KW-0496">Mitochondrion</keyword>
<keyword id="KW-0597">Phosphoprotein</keyword>
<keyword id="KW-1185">Reference proteome</keyword>
<keyword id="KW-0687">Ribonucleoprotein</keyword>
<keyword id="KW-0689">Ribosomal protein</keyword>
<comment type="subunit">
    <text evidence="1">Component of the mitochondrial ribosome small subunit (28S) which comprises a 12S rRNA and about 30 distinct proteins.</text>
</comment>
<comment type="subcellular location">
    <subcellularLocation>
        <location evidence="1">Mitochondrion</location>
    </subcellularLocation>
</comment>
<comment type="disruption phenotype">
    <text evidence="4">Heterozygous MRPS22 knockout mice are fertile and show no overt abnormalities. Homozygous MRPS22 knockout results in embryonic lethality.</text>
</comment>
<comment type="similarity">
    <text evidence="5">Belongs to the mitochondrion-specific ribosomal protein mS22 family.</text>
</comment>
<comment type="sequence caution" evidence="5">
    <conflict type="erroneous initiation">
        <sequence resource="EMBL-CDS" id="AAH21882"/>
    </conflict>
</comment>
<evidence type="ECO:0000250" key="1">
    <source>
        <dbReference type="UniProtKB" id="P82649"/>
    </source>
</evidence>
<evidence type="ECO:0000250" key="2">
    <source>
        <dbReference type="UniProtKB" id="P82650"/>
    </source>
</evidence>
<evidence type="ECO:0000256" key="3">
    <source>
        <dbReference type="SAM" id="MobiDB-lite"/>
    </source>
</evidence>
<evidence type="ECO:0000269" key="4">
    <source>
    </source>
</evidence>
<evidence type="ECO:0000305" key="5"/>
<organism>
    <name type="scientific">Mus musculus</name>
    <name type="common">Mouse</name>
    <dbReference type="NCBI Taxonomy" id="10090"/>
    <lineage>
        <taxon>Eukaryota</taxon>
        <taxon>Metazoa</taxon>
        <taxon>Chordata</taxon>
        <taxon>Craniata</taxon>
        <taxon>Vertebrata</taxon>
        <taxon>Euteleostomi</taxon>
        <taxon>Mammalia</taxon>
        <taxon>Eutheria</taxon>
        <taxon>Euarchontoglires</taxon>
        <taxon>Glires</taxon>
        <taxon>Rodentia</taxon>
        <taxon>Myomorpha</taxon>
        <taxon>Muroidea</taxon>
        <taxon>Muridae</taxon>
        <taxon>Murinae</taxon>
        <taxon>Mus</taxon>
        <taxon>Mus</taxon>
    </lineage>
</organism>
<name>RT22_MOUSE</name>
<sequence>MAAVRTPLSLWRFQLGSRRARRVCTRATAQRHPDALLATRPQPFEVGQPRRLLSSEAESGSSEVKKPAFMDEEVQRILTKITGLDLQKTFRPAIQPLKPPTYKLMTQAQLEEATRLAVEAAKVRLKMPPVLEERKPINDVLAEDKILEGTETNKYVFTDISYNIPHRERFIVVREPSGTLRKASWEERDRVIQIYFPKEGRRVLPPVIFKDENLKTMYSQDRHADVLNLCVAQFEPDSAEYIKVHHQTYEDIDRHGKYELLRSTRHFGGMAWYFVNKKKIDGLLIDQIQRDLVDDATSLVQLYHMLHPDGQSAQEAKEQAAEGVDLIKVFAKTEAQRGAYIELALQTYQEIVTSHSAAS</sequence>